<protein>
    <recommendedName>
        <fullName>Cytochrome b</fullName>
    </recommendedName>
    <alternativeName>
        <fullName>Complex III subunit 3</fullName>
    </alternativeName>
    <alternativeName>
        <fullName>Complex III subunit III</fullName>
    </alternativeName>
    <alternativeName>
        <fullName>Cytochrome b-c1 complex subunit 3</fullName>
    </alternativeName>
    <alternativeName>
        <fullName>Ubiquinol-cytochrome-c reductase complex cytochrome b subunit</fullName>
    </alternativeName>
</protein>
<proteinExistence type="inferred from homology"/>
<comment type="function">
    <text evidence="2">Component of the ubiquinol-cytochrome c reductase complex (complex III or cytochrome b-c1 complex) that is part of the mitochondrial respiratory chain. The b-c1 complex mediates electron transfer from ubiquinol to cytochrome c. Contributes to the generation of a proton gradient across the mitochondrial membrane that is then used for ATP synthesis.</text>
</comment>
<comment type="cofactor">
    <cofactor evidence="2">
        <name>heme b</name>
        <dbReference type="ChEBI" id="CHEBI:60344"/>
    </cofactor>
    <text evidence="2">Binds 2 heme b groups non-covalently.</text>
</comment>
<comment type="subunit">
    <text evidence="2">The cytochrome bc1 complex contains 3 respiratory subunits (MT-CYB, CYC1 and UQCRFS1), 2 core proteins (UQCRC1 and UQCRC2) and probably 6 low-molecular weight proteins.</text>
</comment>
<comment type="subcellular location">
    <subcellularLocation>
        <location evidence="2">Mitochondrion inner membrane</location>
        <topology evidence="2">Multi-pass membrane protein</topology>
    </subcellularLocation>
</comment>
<comment type="miscellaneous">
    <text evidence="1">Heme 1 (or BL or b562) is low-potential and absorbs at about 562 nm, and heme 2 (or BH or b566) is high-potential and absorbs at about 566 nm.</text>
</comment>
<comment type="similarity">
    <text evidence="3 4">Belongs to the cytochrome b family.</text>
</comment>
<comment type="caution">
    <text evidence="2">The full-length protein contains only eight transmembrane helices, not nine as predicted by bioinformatics tools.</text>
</comment>
<keyword id="KW-0249">Electron transport</keyword>
<keyword id="KW-0349">Heme</keyword>
<keyword id="KW-0408">Iron</keyword>
<keyword id="KW-0472">Membrane</keyword>
<keyword id="KW-0479">Metal-binding</keyword>
<keyword id="KW-0496">Mitochondrion</keyword>
<keyword id="KW-0999">Mitochondrion inner membrane</keyword>
<keyword id="KW-0679">Respiratory chain</keyword>
<keyword id="KW-0812">Transmembrane</keyword>
<keyword id="KW-1133">Transmembrane helix</keyword>
<keyword id="KW-0813">Transport</keyword>
<keyword id="KW-0830">Ubiquinone</keyword>
<feature type="chain" id="PRO_0000060527" description="Cytochrome b">
    <location>
        <begin position="1"/>
        <end position="372"/>
    </location>
</feature>
<feature type="transmembrane region" description="Helical" evidence="2">
    <location>
        <begin position="25"/>
        <end position="45"/>
    </location>
</feature>
<feature type="transmembrane region" description="Helical" evidence="2">
    <location>
        <begin position="69"/>
        <end position="90"/>
    </location>
</feature>
<feature type="transmembrane region" description="Helical" evidence="2">
    <location>
        <begin position="105"/>
        <end position="125"/>
    </location>
</feature>
<feature type="transmembrane region" description="Helical" evidence="2">
    <location>
        <begin position="170"/>
        <end position="190"/>
    </location>
</feature>
<feature type="transmembrane region" description="Helical" evidence="2">
    <location>
        <begin position="218"/>
        <end position="238"/>
    </location>
</feature>
<feature type="transmembrane region" description="Helical" evidence="2">
    <location>
        <begin position="280"/>
        <end position="300"/>
    </location>
</feature>
<feature type="transmembrane region" description="Helical" evidence="2">
    <location>
        <begin position="312"/>
        <end position="332"/>
    </location>
</feature>
<feature type="transmembrane region" description="Helical" evidence="2">
    <location>
        <begin position="339"/>
        <end position="358"/>
    </location>
</feature>
<feature type="binding site" description="axial binding residue" evidence="2">
    <location>
        <position position="75"/>
    </location>
    <ligand>
        <name>heme b</name>
        <dbReference type="ChEBI" id="CHEBI:60344"/>
        <label>b562</label>
    </ligand>
    <ligandPart>
        <name>Fe</name>
        <dbReference type="ChEBI" id="CHEBI:18248"/>
    </ligandPart>
</feature>
<feature type="binding site" description="axial binding residue" evidence="2">
    <location>
        <position position="89"/>
    </location>
    <ligand>
        <name>heme b</name>
        <dbReference type="ChEBI" id="CHEBI:60344"/>
        <label>b566</label>
    </ligand>
    <ligandPart>
        <name>Fe</name>
        <dbReference type="ChEBI" id="CHEBI:18248"/>
    </ligandPart>
</feature>
<feature type="binding site" description="axial binding residue" evidence="2">
    <location>
        <position position="174"/>
    </location>
    <ligand>
        <name>heme b</name>
        <dbReference type="ChEBI" id="CHEBI:60344"/>
        <label>b562</label>
    </ligand>
    <ligandPart>
        <name>Fe</name>
        <dbReference type="ChEBI" id="CHEBI:18248"/>
    </ligandPart>
</feature>
<feature type="binding site" description="axial binding residue" evidence="2">
    <location>
        <position position="188"/>
    </location>
    <ligand>
        <name>heme b</name>
        <dbReference type="ChEBI" id="CHEBI:60344"/>
        <label>b566</label>
    </ligand>
    <ligandPart>
        <name>Fe</name>
        <dbReference type="ChEBI" id="CHEBI:18248"/>
    </ligandPart>
</feature>
<feature type="binding site" evidence="2">
    <location>
        <position position="193"/>
    </location>
    <ligand>
        <name>a ubiquinone</name>
        <dbReference type="ChEBI" id="CHEBI:16389"/>
    </ligand>
</feature>
<feature type="sequence variant">
    <original>L</original>
    <variation>R</variation>
    <location>
        <position position="7"/>
    </location>
</feature>
<feature type="sequence variant">
    <original>F</original>
    <variation>L</variation>
    <location>
        <position position="10"/>
    </location>
</feature>
<feature type="sequence variant">
    <original>L</original>
    <variation>W</variation>
    <location>
        <position position="13"/>
    </location>
</feature>
<feature type="sequence variant">
    <original>Y</original>
    <variation>N</variation>
    <location>
        <position position="87"/>
    </location>
</feature>
<feature type="sequence variant">
    <original>Y</original>
    <variation>S</variation>
    <location>
        <position position="215"/>
    </location>
</feature>
<feature type="sequence variant">
    <original>F</original>
    <variation>S</variation>
    <location>
        <position position="298"/>
    </location>
</feature>
<organism>
    <name type="scientific">Acrantophis dumerili</name>
    <name type="common">Dumeril's ground boa</name>
    <name type="synonym">Boa dumerili</name>
    <dbReference type="NCBI Taxonomy" id="51850"/>
    <lineage>
        <taxon>Eukaryota</taxon>
        <taxon>Metazoa</taxon>
        <taxon>Chordata</taxon>
        <taxon>Craniata</taxon>
        <taxon>Vertebrata</taxon>
        <taxon>Euteleostomi</taxon>
        <taxon>Lepidosauria</taxon>
        <taxon>Squamata</taxon>
        <taxon>Bifurcata</taxon>
        <taxon>Unidentata</taxon>
        <taxon>Episquamata</taxon>
        <taxon>Toxicofera</taxon>
        <taxon>Serpentes</taxon>
        <taxon>Henophidia</taxon>
        <taxon>Boidae</taxon>
        <taxon>Boinae</taxon>
        <taxon>Acrantophis</taxon>
    </lineage>
</organism>
<geneLocation type="mitochondrion"/>
<evidence type="ECO:0000250" key="1"/>
<evidence type="ECO:0000250" key="2">
    <source>
        <dbReference type="UniProtKB" id="P00157"/>
    </source>
</evidence>
<evidence type="ECO:0000255" key="3">
    <source>
        <dbReference type="PROSITE-ProRule" id="PRU00967"/>
    </source>
</evidence>
<evidence type="ECO:0000255" key="4">
    <source>
        <dbReference type="PROSITE-ProRule" id="PRU00968"/>
    </source>
</evidence>
<sequence length="372" mass="42313">MPHQQILMLFGLLPVATNISTWWNFGSMLLTCSALQIMTGFFLSMHYTANINLAFSSIVHVVRDVPHGWMMQNLHAIGASMFFICVYIHVARGLYYGSYLNKETWLSGTTLLIMLMATAFFGYVLPWGQMSFWAATVITNLLTAIPYLGTTMTTWLWGGFAINDPTLTRFFALHFILPFGIISLSSLHIMLLHAEGSSNPLGTNSDIDKIPFHPYHTYKDLFMISSMIMIMLLTISFIPDIFNDPENFSKANPLVTPQHIKPEWYFLFAYGILRSIPNKLGGALALAMSITILLTVPFTHTANTRSMTFRPFMQLMFWTLVTTFMIITWTATKPVEPPYTMISQVTSSLYFMFFMSNPIVGWLENKIMKTQL</sequence>
<reference key="1">
    <citation type="thesis" date="1997" institute="Queen's University / Kingston" country="Canada">
        <title>Hic Sunt Serpentes -- molecular phylogenetics and the Boidae (Serpentes: Booidea).</title>
        <authorList>
            <person name="Campbell B.N."/>
        </authorList>
    </citation>
    <scope>NUCLEOTIDE SEQUENCE [GENOMIC DNA]</scope>
</reference>
<dbReference type="EMBL" id="U69734">
    <property type="protein sequence ID" value="AAD13426.1"/>
    <property type="molecule type" value="Genomic_DNA"/>
</dbReference>
<dbReference type="EMBL" id="U69735">
    <property type="protein sequence ID" value="AAD13427.1"/>
    <property type="molecule type" value="Genomic_DNA"/>
</dbReference>
<dbReference type="SMR" id="O48010"/>
<dbReference type="GO" id="GO:0005743">
    <property type="term" value="C:mitochondrial inner membrane"/>
    <property type="evidence" value="ECO:0007669"/>
    <property type="project" value="UniProtKB-SubCell"/>
</dbReference>
<dbReference type="GO" id="GO:0045275">
    <property type="term" value="C:respiratory chain complex III"/>
    <property type="evidence" value="ECO:0007669"/>
    <property type="project" value="InterPro"/>
</dbReference>
<dbReference type="GO" id="GO:0046872">
    <property type="term" value="F:metal ion binding"/>
    <property type="evidence" value="ECO:0007669"/>
    <property type="project" value="UniProtKB-KW"/>
</dbReference>
<dbReference type="GO" id="GO:0008121">
    <property type="term" value="F:ubiquinol-cytochrome-c reductase activity"/>
    <property type="evidence" value="ECO:0007669"/>
    <property type="project" value="InterPro"/>
</dbReference>
<dbReference type="GO" id="GO:0006122">
    <property type="term" value="P:mitochondrial electron transport, ubiquinol to cytochrome c"/>
    <property type="evidence" value="ECO:0007669"/>
    <property type="project" value="TreeGrafter"/>
</dbReference>
<dbReference type="CDD" id="cd00290">
    <property type="entry name" value="cytochrome_b_C"/>
    <property type="match status" value="1"/>
</dbReference>
<dbReference type="CDD" id="cd00284">
    <property type="entry name" value="Cytochrome_b_N"/>
    <property type="match status" value="1"/>
</dbReference>
<dbReference type="Gene3D" id="1.20.810.10">
    <property type="entry name" value="Cytochrome Bc1 Complex, Chain C"/>
    <property type="match status" value="1"/>
</dbReference>
<dbReference type="InterPro" id="IPR005798">
    <property type="entry name" value="Cyt_b/b6_C"/>
</dbReference>
<dbReference type="InterPro" id="IPR036150">
    <property type="entry name" value="Cyt_b/b6_C_sf"/>
</dbReference>
<dbReference type="InterPro" id="IPR005797">
    <property type="entry name" value="Cyt_b/b6_N"/>
</dbReference>
<dbReference type="InterPro" id="IPR027387">
    <property type="entry name" value="Cytb/b6-like_sf"/>
</dbReference>
<dbReference type="InterPro" id="IPR030689">
    <property type="entry name" value="Cytochrome_b"/>
</dbReference>
<dbReference type="InterPro" id="IPR048260">
    <property type="entry name" value="Cytochrome_b_C_euk/bac"/>
</dbReference>
<dbReference type="InterPro" id="IPR048259">
    <property type="entry name" value="Cytochrome_b_N_euk/bac"/>
</dbReference>
<dbReference type="InterPro" id="IPR016174">
    <property type="entry name" value="Di-haem_cyt_TM"/>
</dbReference>
<dbReference type="PANTHER" id="PTHR19271">
    <property type="entry name" value="CYTOCHROME B"/>
    <property type="match status" value="1"/>
</dbReference>
<dbReference type="PANTHER" id="PTHR19271:SF16">
    <property type="entry name" value="CYTOCHROME B"/>
    <property type="match status" value="1"/>
</dbReference>
<dbReference type="Pfam" id="PF00032">
    <property type="entry name" value="Cytochrom_B_C"/>
    <property type="match status" value="1"/>
</dbReference>
<dbReference type="Pfam" id="PF00033">
    <property type="entry name" value="Cytochrome_B"/>
    <property type="match status" value="1"/>
</dbReference>
<dbReference type="PIRSF" id="PIRSF038885">
    <property type="entry name" value="COB"/>
    <property type="match status" value="1"/>
</dbReference>
<dbReference type="SUPFAM" id="SSF81648">
    <property type="entry name" value="a domain/subunit of cytochrome bc1 complex (Ubiquinol-cytochrome c reductase)"/>
    <property type="match status" value="1"/>
</dbReference>
<dbReference type="SUPFAM" id="SSF81342">
    <property type="entry name" value="Transmembrane di-heme cytochromes"/>
    <property type="match status" value="1"/>
</dbReference>
<dbReference type="PROSITE" id="PS51003">
    <property type="entry name" value="CYTB_CTER"/>
    <property type="match status" value="1"/>
</dbReference>
<dbReference type="PROSITE" id="PS51002">
    <property type="entry name" value="CYTB_NTER"/>
    <property type="match status" value="1"/>
</dbReference>
<gene>
    <name type="primary">MT-CYB</name>
    <name type="synonym">COB</name>
    <name type="synonym">CYTB</name>
    <name type="synonym">MTCYB</name>
</gene>
<accession>O48010</accession>
<accession>O48011</accession>
<name>CYB_ACRDU</name>